<comment type="function">
    <text evidence="7 8">May play a role in signal transduction pathways that involve calcium as a second messenger. Functions as a regulator of the calcium-mediated abscisic acid (ABA) signaling pathway. Phosphorylates ABA-responsive transcription factors ABF1 and ABF4 in vitro. Phosphorylates the nuclear zinc finger Di19 in vitro.</text>
</comment>
<comment type="catalytic activity">
    <reaction>
        <text>L-seryl-[protein] + ATP = O-phospho-L-seryl-[protein] + ADP + H(+)</text>
        <dbReference type="Rhea" id="RHEA:17989"/>
        <dbReference type="Rhea" id="RHEA-COMP:9863"/>
        <dbReference type="Rhea" id="RHEA-COMP:11604"/>
        <dbReference type="ChEBI" id="CHEBI:15378"/>
        <dbReference type="ChEBI" id="CHEBI:29999"/>
        <dbReference type="ChEBI" id="CHEBI:30616"/>
        <dbReference type="ChEBI" id="CHEBI:83421"/>
        <dbReference type="ChEBI" id="CHEBI:456216"/>
        <dbReference type="EC" id="2.7.11.1"/>
    </reaction>
</comment>
<comment type="catalytic activity">
    <reaction>
        <text>L-threonyl-[protein] + ATP = O-phospho-L-threonyl-[protein] + ADP + H(+)</text>
        <dbReference type="Rhea" id="RHEA:46608"/>
        <dbReference type="Rhea" id="RHEA-COMP:11060"/>
        <dbReference type="Rhea" id="RHEA-COMP:11605"/>
        <dbReference type="ChEBI" id="CHEBI:15378"/>
        <dbReference type="ChEBI" id="CHEBI:30013"/>
        <dbReference type="ChEBI" id="CHEBI:30616"/>
        <dbReference type="ChEBI" id="CHEBI:61977"/>
        <dbReference type="ChEBI" id="CHEBI:456216"/>
        <dbReference type="EC" id="2.7.11.1"/>
    </reaction>
</comment>
<comment type="activity regulation">
    <text evidence="1">Activated by calcium. Autophosphorylation may play an important role in the regulation of the kinase activity (By similarity).</text>
</comment>
<comment type="subunit">
    <text evidence="7">Interacts with Di19.</text>
</comment>
<comment type="interaction">
    <interactant intactId="EBI-979475">
        <id>Q38869</id>
    </interactant>
    <interactant intactId="EBI-540986">
        <id>Q94BN0</id>
        <label>BT2</label>
    </interactant>
    <organismsDiffer>false</organismsDiffer>
    <experiments>7</experiments>
</comment>
<comment type="interaction">
    <interactant intactId="EBI-979475">
        <id>Q38869</id>
    </interactant>
    <interactant intactId="EBI-979339">
        <id>Q39083</id>
        <label>DI19-1</label>
    </interactant>
    <organismsDiffer>false</organismsDiffer>
    <experiments>5</experiments>
</comment>
<comment type="interaction">
    <interactant intactId="EBI-979475">
        <id>Q38869</id>
    </interactant>
    <interactant intactId="EBI-2297116">
        <id>Q9LIS3</id>
        <label>GAE6</label>
    </interactant>
    <organismsDiffer>false</organismsDiffer>
    <experiments>4</experiments>
</comment>
<comment type="interaction">
    <interactant intactId="EBI-979475">
        <id>Q38869</id>
    </interactant>
    <interactant intactId="EBI-2296482">
        <id>O23338</id>
        <label>HSP1</label>
    </interactant>
    <organismsDiffer>false</organismsDiffer>
    <experiments>3</experiments>
</comment>
<comment type="interaction">
    <interactant intactId="EBI-979475">
        <id>Q38869</id>
    </interactant>
    <interactant intactId="EBI-2213247">
        <id>Q9C593</id>
        <label>O3L1</label>
    </interactant>
    <organismsDiffer>false</organismsDiffer>
    <experiments>3</experiments>
</comment>
<comment type="interaction">
    <interactant intactId="EBI-979475">
        <id>Q38869</id>
    </interactant>
    <interactant intactId="EBI-639377">
        <id>O23680</id>
        <label>TOC33</label>
    </interactant>
    <organismsDiffer>false</organismsDiffer>
    <experiments>5</experiments>
</comment>
<comment type="subcellular location">
    <subcellularLocation>
        <location evidence="6">Cytoplasm</location>
    </subcellularLocation>
    <subcellularLocation>
        <location evidence="6">Nucleus</location>
    </subcellularLocation>
</comment>
<comment type="domain">
    <text evidence="1">There are 3 contiguous domains conserved in the CDPK subfamily: a kinase domain, an autoinhibitory (junction) domain and a calmodulin-like domain. The autoinhibitory domain (289-319) inactivates kinase activity under calcium-free conditions (By similarity).</text>
</comment>
<comment type="disruption phenotype">
    <text evidence="8">Mutant cpk4-1 shows reduced ABA and salt responsiveness in seed germination.</text>
</comment>
<comment type="similarity">
    <text evidence="3">Belongs to the protein kinase superfamily. Ser/Thr protein kinase family. CDPK subfamily.</text>
</comment>
<feature type="chain" id="PRO_0000304510" description="Calcium-dependent protein kinase 4">
    <location>
        <begin position="1"/>
        <end position="501"/>
    </location>
</feature>
<feature type="domain" description="Protein kinase" evidence="3">
    <location>
        <begin position="25"/>
        <end position="283"/>
    </location>
</feature>
<feature type="domain" description="EF-hand 1" evidence="4">
    <location>
        <begin position="326"/>
        <end position="361"/>
    </location>
</feature>
<feature type="domain" description="EF-hand 2" evidence="4">
    <location>
        <begin position="362"/>
        <end position="397"/>
    </location>
</feature>
<feature type="domain" description="EF-hand 3" evidence="4">
    <location>
        <begin position="398"/>
        <end position="433"/>
    </location>
</feature>
<feature type="domain" description="EF-hand 4" evidence="4">
    <location>
        <begin position="437"/>
        <end position="467"/>
    </location>
</feature>
<feature type="region of interest" description="Autoinhibitory domain" evidence="1">
    <location>
        <begin position="289"/>
        <end position="319"/>
    </location>
</feature>
<feature type="active site" description="Proton acceptor" evidence="3 5">
    <location>
        <position position="149"/>
    </location>
</feature>
<feature type="binding site" evidence="3">
    <location>
        <begin position="31"/>
        <end position="39"/>
    </location>
    <ligand>
        <name>ATP</name>
        <dbReference type="ChEBI" id="CHEBI:30616"/>
    </ligand>
</feature>
<feature type="binding site" evidence="3">
    <location>
        <position position="54"/>
    </location>
    <ligand>
        <name>ATP</name>
        <dbReference type="ChEBI" id="CHEBI:30616"/>
    </ligand>
</feature>
<feature type="binding site" evidence="4">
    <location>
        <position position="339"/>
    </location>
    <ligand>
        <name>Ca(2+)</name>
        <dbReference type="ChEBI" id="CHEBI:29108"/>
        <label>1</label>
    </ligand>
</feature>
<feature type="binding site" evidence="4">
    <location>
        <position position="341"/>
    </location>
    <ligand>
        <name>Ca(2+)</name>
        <dbReference type="ChEBI" id="CHEBI:29108"/>
        <label>1</label>
    </ligand>
</feature>
<feature type="binding site" evidence="4">
    <location>
        <position position="343"/>
    </location>
    <ligand>
        <name>Ca(2+)</name>
        <dbReference type="ChEBI" id="CHEBI:29108"/>
        <label>1</label>
    </ligand>
</feature>
<feature type="binding site" evidence="4">
    <location>
        <position position="345"/>
    </location>
    <ligand>
        <name>Ca(2+)</name>
        <dbReference type="ChEBI" id="CHEBI:29108"/>
        <label>1</label>
    </ligand>
</feature>
<feature type="binding site" evidence="4">
    <location>
        <position position="350"/>
    </location>
    <ligand>
        <name>Ca(2+)</name>
        <dbReference type="ChEBI" id="CHEBI:29108"/>
        <label>1</label>
    </ligand>
</feature>
<feature type="binding site" evidence="4">
    <location>
        <position position="375"/>
    </location>
    <ligand>
        <name>Ca(2+)</name>
        <dbReference type="ChEBI" id="CHEBI:29108"/>
        <label>2</label>
    </ligand>
</feature>
<feature type="binding site" evidence="4">
    <location>
        <position position="377"/>
    </location>
    <ligand>
        <name>Ca(2+)</name>
        <dbReference type="ChEBI" id="CHEBI:29108"/>
        <label>2</label>
    </ligand>
</feature>
<feature type="binding site" evidence="4">
    <location>
        <position position="379"/>
    </location>
    <ligand>
        <name>Ca(2+)</name>
        <dbReference type="ChEBI" id="CHEBI:29108"/>
        <label>2</label>
    </ligand>
</feature>
<feature type="binding site" evidence="4">
    <location>
        <position position="381"/>
    </location>
    <ligand>
        <name>Ca(2+)</name>
        <dbReference type="ChEBI" id="CHEBI:29108"/>
        <label>2</label>
    </ligand>
</feature>
<feature type="binding site" evidence="4">
    <location>
        <position position="386"/>
    </location>
    <ligand>
        <name>Ca(2+)</name>
        <dbReference type="ChEBI" id="CHEBI:29108"/>
        <label>2</label>
    </ligand>
</feature>
<feature type="binding site" evidence="4">
    <location>
        <position position="411"/>
    </location>
    <ligand>
        <name>Ca(2+)</name>
        <dbReference type="ChEBI" id="CHEBI:29108"/>
        <label>3</label>
    </ligand>
</feature>
<feature type="binding site" evidence="4">
    <location>
        <position position="413"/>
    </location>
    <ligand>
        <name>Ca(2+)</name>
        <dbReference type="ChEBI" id="CHEBI:29108"/>
        <label>3</label>
    </ligand>
</feature>
<feature type="binding site" evidence="4">
    <location>
        <position position="415"/>
    </location>
    <ligand>
        <name>Ca(2+)</name>
        <dbReference type="ChEBI" id="CHEBI:29108"/>
        <label>3</label>
    </ligand>
</feature>
<feature type="binding site" evidence="4">
    <location>
        <position position="417"/>
    </location>
    <ligand>
        <name>Ca(2+)</name>
        <dbReference type="ChEBI" id="CHEBI:29108"/>
        <label>3</label>
    </ligand>
</feature>
<feature type="binding site" evidence="4">
    <location>
        <position position="422"/>
    </location>
    <ligand>
        <name>Ca(2+)</name>
        <dbReference type="ChEBI" id="CHEBI:29108"/>
        <label>3</label>
    </ligand>
</feature>
<feature type="binding site" evidence="4">
    <location>
        <position position="445"/>
    </location>
    <ligand>
        <name>Ca(2+)</name>
        <dbReference type="ChEBI" id="CHEBI:29108"/>
        <label>4</label>
    </ligand>
</feature>
<feature type="binding site" evidence="4">
    <location>
        <position position="447"/>
    </location>
    <ligand>
        <name>Ca(2+)</name>
        <dbReference type="ChEBI" id="CHEBI:29108"/>
        <label>4</label>
    </ligand>
</feature>
<feature type="binding site" evidence="4">
    <location>
        <position position="449"/>
    </location>
    <ligand>
        <name>Ca(2+)</name>
        <dbReference type="ChEBI" id="CHEBI:29108"/>
        <label>4</label>
    </ligand>
</feature>
<feature type="binding site" evidence="4">
    <location>
        <position position="451"/>
    </location>
    <ligand>
        <name>Ca(2+)</name>
        <dbReference type="ChEBI" id="CHEBI:29108"/>
        <label>4</label>
    </ligand>
</feature>
<feature type="binding site" evidence="4">
    <location>
        <position position="456"/>
    </location>
    <ligand>
        <name>Ca(2+)</name>
        <dbReference type="ChEBI" id="CHEBI:29108"/>
        <label>4</label>
    </ligand>
</feature>
<feature type="modified residue" description="Phosphoserine" evidence="2">
    <location>
        <position position="189"/>
    </location>
</feature>
<dbReference type="EC" id="2.7.11.1"/>
<dbReference type="EMBL" id="U31752">
    <property type="protein sequence ID" value="AAB03243.1"/>
    <property type="molecule type" value="mRNA"/>
</dbReference>
<dbReference type="EMBL" id="AL161515">
    <property type="protein sequence ID" value="CAB78080.1"/>
    <property type="molecule type" value="Genomic_DNA"/>
</dbReference>
<dbReference type="EMBL" id="AL161831">
    <property type="protein sequence ID" value="CAB82124.1"/>
    <property type="molecule type" value="Genomic_DNA"/>
</dbReference>
<dbReference type="EMBL" id="CP002687">
    <property type="protein sequence ID" value="AEE82766.1"/>
    <property type="molecule type" value="Genomic_DNA"/>
</dbReference>
<dbReference type="PIR" id="G85097">
    <property type="entry name" value="G85097"/>
</dbReference>
<dbReference type="RefSeq" id="NP_192695.1">
    <property type="nucleotide sequence ID" value="NM_117025.6"/>
</dbReference>
<dbReference type="SMR" id="Q38869"/>
<dbReference type="BioGRID" id="11840">
    <property type="interactions" value="32"/>
</dbReference>
<dbReference type="FunCoup" id="Q38869">
    <property type="interactions" value="594"/>
</dbReference>
<dbReference type="IntAct" id="Q38869">
    <property type="interactions" value="34"/>
</dbReference>
<dbReference type="MINT" id="Q38869"/>
<dbReference type="STRING" id="3702.Q38869"/>
<dbReference type="iPTMnet" id="Q38869"/>
<dbReference type="PaxDb" id="3702-AT4G09570.1"/>
<dbReference type="ProteomicsDB" id="224455"/>
<dbReference type="EnsemblPlants" id="AT4G09570.1">
    <property type="protein sequence ID" value="AT4G09570.1"/>
    <property type="gene ID" value="AT4G09570"/>
</dbReference>
<dbReference type="GeneID" id="826541"/>
<dbReference type="Gramene" id="AT4G09570.1">
    <property type="protein sequence ID" value="AT4G09570.1"/>
    <property type="gene ID" value="AT4G09570"/>
</dbReference>
<dbReference type="KEGG" id="ath:AT4G09570"/>
<dbReference type="Araport" id="AT4G09570"/>
<dbReference type="TAIR" id="AT4G09570">
    <property type="gene designation" value="CPK4"/>
</dbReference>
<dbReference type="eggNOG" id="KOG0032">
    <property type="taxonomic scope" value="Eukaryota"/>
</dbReference>
<dbReference type="HOGENOM" id="CLU_000288_37_4_1"/>
<dbReference type="InParanoid" id="Q38869"/>
<dbReference type="OMA" id="CCHKQLQ"/>
<dbReference type="OrthoDB" id="40902at2759"/>
<dbReference type="PhylomeDB" id="Q38869"/>
<dbReference type="PRO" id="PR:Q38869"/>
<dbReference type="Proteomes" id="UP000006548">
    <property type="component" value="Chromosome 4"/>
</dbReference>
<dbReference type="ExpressionAtlas" id="Q38869">
    <property type="expression patterns" value="baseline and differential"/>
</dbReference>
<dbReference type="GO" id="GO:0005737">
    <property type="term" value="C:cytoplasm"/>
    <property type="evidence" value="ECO:0007669"/>
    <property type="project" value="UniProtKB-SubCell"/>
</dbReference>
<dbReference type="GO" id="GO:0005634">
    <property type="term" value="C:nucleus"/>
    <property type="evidence" value="ECO:0007669"/>
    <property type="project" value="UniProtKB-SubCell"/>
</dbReference>
<dbReference type="GO" id="GO:0005524">
    <property type="term" value="F:ATP binding"/>
    <property type="evidence" value="ECO:0007669"/>
    <property type="project" value="UniProtKB-KW"/>
</dbReference>
<dbReference type="GO" id="GO:0005509">
    <property type="term" value="F:calcium ion binding"/>
    <property type="evidence" value="ECO:0007669"/>
    <property type="project" value="InterPro"/>
</dbReference>
<dbReference type="GO" id="GO:0004672">
    <property type="term" value="F:protein kinase activity"/>
    <property type="evidence" value="ECO:0000314"/>
    <property type="project" value="TAIR"/>
</dbReference>
<dbReference type="GO" id="GO:0106310">
    <property type="term" value="F:protein serine kinase activity"/>
    <property type="evidence" value="ECO:0007669"/>
    <property type="project" value="RHEA"/>
</dbReference>
<dbReference type="GO" id="GO:0004674">
    <property type="term" value="F:protein serine/threonine kinase activity"/>
    <property type="evidence" value="ECO:0007669"/>
    <property type="project" value="UniProtKB-KW"/>
</dbReference>
<dbReference type="GO" id="GO:0009789">
    <property type="term" value="P:positive regulation of abscisic acid-activated signaling pathway"/>
    <property type="evidence" value="ECO:0000315"/>
    <property type="project" value="TAIR"/>
</dbReference>
<dbReference type="CDD" id="cd05117">
    <property type="entry name" value="STKc_CAMK"/>
    <property type="match status" value="1"/>
</dbReference>
<dbReference type="FunFam" id="1.10.238.10:FF:000015">
    <property type="entry name" value="Calcium-dependent protein kinase 1"/>
    <property type="match status" value="1"/>
</dbReference>
<dbReference type="FunFam" id="3.30.200.20:FF:000004">
    <property type="entry name" value="Calcium-dependent protein kinase 1"/>
    <property type="match status" value="1"/>
</dbReference>
<dbReference type="FunFam" id="1.10.510.10:FF:000249">
    <property type="entry name" value="Calcium-dependent protein kinase SK5"/>
    <property type="match status" value="1"/>
</dbReference>
<dbReference type="Gene3D" id="1.10.238.10">
    <property type="entry name" value="EF-hand"/>
    <property type="match status" value="1"/>
</dbReference>
<dbReference type="Gene3D" id="3.30.200.20">
    <property type="entry name" value="Phosphorylase Kinase, domain 1"/>
    <property type="match status" value="1"/>
</dbReference>
<dbReference type="Gene3D" id="1.10.510.10">
    <property type="entry name" value="Transferase(Phosphotransferase) domain 1"/>
    <property type="match status" value="1"/>
</dbReference>
<dbReference type="InterPro" id="IPR050205">
    <property type="entry name" value="CDPK_Ser/Thr_kinases"/>
</dbReference>
<dbReference type="InterPro" id="IPR011992">
    <property type="entry name" value="EF-hand-dom_pair"/>
</dbReference>
<dbReference type="InterPro" id="IPR018247">
    <property type="entry name" value="EF_Hand_1_Ca_BS"/>
</dbReference>
<dbReference type="InterPro" id="IPR002048">
    <property type="entry name" value="EF_hand_dom"/>
</dbReference>
<dbReference type="InterPro" id="IPR011009">
    <property type="entry name" value="Kinase-like_dom_sf"/>
</dbReference>
<dbReference type="InterPro" id="IPR000719">
    <property type="entry name" value="Prot_kinase_dom"/>
</dbReference>
<dbReference type="InterPro" id="IPR017441">
    <property type="entry name" value="Protein_kinase_ATP_BS"/>
</dbReference>
<dbReference type="InterPro" id="IPR008271">
    <property type="entry name" value="Ser/Thr_kinase_AS"/>
</dbReference>
<dbReference type="PANTHER" id="PTHR24349">
    <property type="entry name" value="SERINE/THREONINE-PROTEIN KINASE"/>
    <property type="match status" value="1"/>
</dbReference>
<dbReference type="Pfam" id="PF13499">
    <property type="entry name" value="EF-hand_7"/>
    <property type="match status" value="2"/>
</dbReference>
<dbReference type="Pfam" id="PF00069">
    <property type="entry name" value="Pkinase"/>
    <property type="match status" value="1"/>
</dbReference>
<dbReference type="SMART" id="SM00054">
    <property type="entry name" value="EFh"/>
    <property type="match status" value="4"/>
</dbReference>
<dbReference type="SMART" id="SM00220">
    <property type="entry name" value="S_TKc"/>
    <property type="match status" value="1"/>
</dbReference>
<dbReference type="SUPFAM" id="SSF47473">
    <property type="entry name" value="EF-hand"/>
    <property type="match status" value="1"/>
</dbReference>
<dbReference type="SUPFAM" id="SSF56112">
    <property type="entry name" value="Protein kinase-like (PK-like)"/>
    <property type="match status" value="1"/>
</dbReference>
<dbReference type="PROSITE" id="PS00018">
    <property type="entry name" value="EF_HAND_1"/>
    <property type="match status" value="4"/>
</dbReference>
<dbReference type="PROSITE" id="PS50222">
    <property type="entry name" value="EF_HAND_2"/>
    <property type="match status" value="4"/>
</dbReference>
<dbReference type="PROSITE" id="PS00107">
    <property type="entry name" value="PROTEIN_KINASE_ATP"/>
    <property type="match status" value="1"/>
</dbReference>
<dbReference type="PROSITE" id="PS50011">
    <property type="entry name" value="PROTEIN_KINASE_DOM"/>
    <property type="match status" value="1"/>
</dbReference>
<dbReference type="PROSITE" id="PS00108">
    <property type="entry name" value="PROTEIN_KINASE_ST"/>
    <property type="match status" value="1"/>
</dbReference>
<evidence type="ECO:0000250" key="1"/>
<evidence type="ECO:0000250" key="2">
    <source>
        <dbReference type="UniProtKB" id="Q9FKW4"/>
    </source>
</evidence>
<evidence type="ECO:0000255" key="3">
    <source>
        <dbReference type="PROSITE-ProRule" id="PRU00159"/>
    </source>
</evidence>
<evidence type="ECO:0000255" key="4">
    <source>
        <dbReference type="PROSITE-ProRule" id="PRU00448"/>
    </source>
</evidence>
<evidence type="ECO:0000255" key="5">
    <source>
        <dbReference type="PROSITE-ProRule" id="PRU10027"/>
    </source>
</evidence>
<evidence type="ECO:0000269" key="6">
    <source>
    </source>
</evidence>
<evidence type="ECO:0000269" key="7">
    <source>
    </source>
</evidence>
<evidence type="ECO:0000269" key="8">
    <source>
    </source>
</evidence>
<protein>
    <recommendedName>
        <fullName>Calcium-dependent protein kinase 4</fullName>
        <ecNumber>2.7.11.1</ecNumber>
    </recommendedName>
    <alternativeName>
        <fullName>Calmodulin-domain protein kinase CDPK isoform 4</fullName>
    </alternativeName>
</protein>
<reference key="1">
    <citation type="journal article" date="1996" name="Plant Mol. Biol.">
        <title>Characterization of eight new members of the calmodulin-like domain protein kinase gene family from Arabidopsis thaliana.</title>
        <authorList>
            <person name="Hrabak E.M."/>
            <person name="Dickmann L.J."/>
            <person name="Satterlee J.S."/>
            <person name="Sussman M.R."/>
        </authorList>
    </citation>
    <scope>NUCLEOTIDE SEQUENCE [MRNA]</scope>
    <source>
        <strain>cv. Columbia</strain>
    </source>
</reference>
<reference key="2">
    <citation type="journal article" date="1999" name="Nature">
        <title>Sequence and analysis of chromosome 4 of the plant Arabidopsis thaliana.</title>
        <authorList>
            <person name="Mayer K.F.X."/>
            <person name="Schueller C."/>
            <person name="Wambutt R."/>
            <person name="Murphy G."/>
            <person name="Volckaert G."/>
            <person name="Pohl T."/>
            <person name="Duesterhoeft A."/>
            <person name="Stiekema W."/>
            <person name="Entian K.-D."/>
            <person name="Terryn N."/>
            <person name="Harris B."/>
            <person name="Ansorge W."/>
            <person name="Brandt P."/>
            <person name="Grivell L.A."/>
            <person name="Rieger M."/>
            <person name="Weichselgartner M."/>
            <person name="de Simone V."/>
            <person name="Obermaier B."/>
            <person name="Mache R."/>
            <person name="Mueller M."/>
            <person name="Kreis M."/>
            <person name="Delseny M."/>
            <person name="Puigdomenech P."/>
            <person name="Watson M."/>
            <person name="Schmidtheini T."/>
            <person name="Reichert B."/>
            <person name="Portetelle D."/>
            <person name="Perez-Alonso M."/>
            <person name="Boutry M."/>
            <person name="Bancroft I."/>
            <person name="Vos P."/>
            <person name="Hoheisel J."/>
            <person name="Zimmermann W."/>
            <person name="Wedler H."/>
            <person name="Ridley P."/>
            <person name="Langham S.-A."/>
            <person name="McCullagh B."/>
            <person name="Bilham L."/>
            <person name="Robben J."/>
            <person name="van der Schueren J."/>
            <person name="Grymonprez B."/>
            <person name="Chuang Y.-J."/>
            <person name="Vandenbussche F."/>
            <person name="Braeken M."/>
            <person name="Weltjens I."/>
            <person name="Voet M."/>
            <person name="Bastiaens I."/>
            <person name="Aert R."/>
            <person name="Defoor E."/>
            <person name="Weitzenegger T."/>
            <person name="Bothe G."/>
            <person name="Ramsperger U."/>
            <person name="Hilbert H."/>
            <person name="Braun M."/>
            <person name="Holzer E."/>
            <person name="Brandt A."/>
            <person name="Peters S."/>
            <person name="van Staveren M."/>
            <person name="Dirkse W."/>
            <person name="Mooijman P."/>
            <person name="Klein Lankhorst R."/>
            <person name="Rose M."/>
            <person name="Hauf J."/>
            <person name="Koetter P."/>
            <person name="Berneiser S."/>
            <person name="Hempel S."/>
            <person name="Feldpausch M."/>
            <person name="Lamberth S."/>
            <person name="Van den Daele H."/>
            <person name="De Keyser A."/>
            <person name="Buysshaert C."/>
            <person name="Gielen J."/>
            <person name="Villarroel R."/>
            <person name="De Clercq R."/>
            <person name="van Montagu M."/>
            <person name="Rogers J."/>
            <person name="Cronin A."/>
            <person name="Quail M.A."/>
            <person name="Bray-Allen S."/>
            <person name="Clark L."/>
            <person name="Doggett J."/>
            <person name="Hall S."/>
            <person name="Kay M."/>
            <person name="Lennard N."/>
            <person name="McLay K."/>
            <person name="Mayes R."/>
            <person name="Pettett A."/>
            <person name="Rajandream M.A."/>
            <person name="Lyne M."/>
            <person name="Benes V."/>
            <person name="Rechmann S."/>
            <person name="Borkova D."/>
            <person name="Bloecker H."/>
            <person name="Scharfe M."/>
            <person name="Grimm M."/>
            <person name="Loehnert T.-H."/>
            <person name="Dose S."/>
            <person name="de Haan M."/>
            <person name="Maarse A.C."/>
            <person name="Schaefer M."/>
            <person name="Mueller-Auer S."/>
            <person name="Gabel C."/>
            <person name="Fuchs M."/>
            <person name="Fartmann B."/>
            <person name="Granderath K."/>
            <person name="Dauner D."/>
            <person name="Herzl A."/>
            <person name="Neumann S."/>
            <person name="Argiriou A."/>
            <person name="Vitale D."/>
            <person name="Liguori R."/>
            <person name="Piravandi E."/>
            <person name="Massenet O."/>
            <person name="Quigley F."/>
            <person name="Clabauld G."/>
            <person name="Muendlein A."/>
            <person name="Felber R."/>
            <person name="Schnabl S."/>
            <person name="Hiller R."/>
            <person name="Schmidt W."/>
            <person name="Lecharny A."/>
            <person name="Aubourg S."/>
            <person name="Chefdor F."/>
            <person name="Cooke R."/>
            <person name="Berger C."/>
            <person name="Monfort A."/>
            <person name="Casacuberta E."/>
            <person name="Gibbons T."/>
            <person name="Weber N."/>
            <person name="Vandenbol M."/>
            <person name="Bargues M."/>
            <person name="Terol J."/>
            <person name="Torres A."/>
            <person name="Perez-Perez A."/>
            <person name="Purnelle B."/>
            <person name="Bent E."/>
            <person name="Johnson S."/>
            <person name="Tacon D."/>
            <person name="Jesse T."/>
            <person name="Heijnen L."/>
            <person name="Schwarz S."/>
            <person name="Scholler P."/>
            <person name="Heber S."/>
            <person name="Francs P."/>
            <person name="Bielke C."/>
            <person name="Frishman D."/>
            <person name="Haase D."/>
            <person name="Lemcke K."/>
            <person name="Mewes H.-W."/>
            <person name="Stocker S."/>
            <person name="Zaccaria P."/>
            <person name="Bevan M."/>
            <person name="Wilson R.K."/>
            <person name="de la Bastide M."/>
            <person name="Habermann K."/>
            <person name="Parnell L."/>
            <person name="Dedhia N."/>
            <person name="Gnoj L."/>
            <person name="Schutz K."/>
            <person name="Huang E."/>
            <person name="Spiegel L."/>
            <person name="Sekhon M."/>
            <person name="Murray J."/>
            <person name="Sheet P."/>
            <person name="Cordes M."/>
            <person name="Abu-Threideh J."/>
            <person name="Stoneking T."/>
            <person name="Kalicki J."/>
            <person name="Graves T."/>
            <person name="Harmon G."/>
            <person name="Edwards J."/>
            <person name="Latreille P."/>
            <person name="Courtney L."/>
            <person name="Cloud J."/>
            <person name="Abbott A."/>
            <person name="Scott K."/>
            <person name="Johnson D."/>
            <person name="Minx P."/>
            <person name="Bentley D."/>
            <person name="Fulton B."/>
            <person name="Miller N."/>
            <person name="Greco T."/>
            <person name="Kemp K."/>
            <person name="Kramer J."/>
            <person name="Fulton L."/>
            <person name="Mardis E."/>
            <person name="Dante M."/>
            <person name="Pepin K."/>
            <person name="Hillier L.W."/>
            <person name="Nelson J."/>
            <person name="Spieth J."/>
            <person name="Ryan E."/>
            <person name="Andrews S."/>
            <person name="Geisel C."/>
            <person name="Layman D."/>
            <person name="Du H."/>
            <person name="Ali J."/>
            <person name="Berghoff A."/>
            <person name="Jones K."/>
            <person name="Drone K."/>
            <person name="Cotton M."/>
            <person name="Joshu C."/>
            <person name="Antonoiu B."/>
            <person name="Zidanic M."/>
            <person name="Strong C."/>
            <person name="Sun H."/>
            <person name="Lamar B."/>
            <person name="Yordan C."/>
            <person name="Ma P."/>
            <person name="Zhong J."/>
            <person name="Preston R."/>
            <person name="Vil D."/>
            <person name="Shekher M."/>
            <person name="Matero A."/>
            <person name="Shah R."/>
            <person name="Swaby I.K."/>
            <person name="O'Shaughnessy A."/>
            <person name="Rodriguez M."/>
            <person name="Hoffman J."/>
            <person name="Till S."/>
            <person name="Granat S."/>
            <person name="Shohdy N."/>
            <person name="Hasegawa A."/>
            <person name="Hameed A."/>
            <person name="Lodhi M."/>
            <person name="Johnson A."/>
            <person name="Chen E."/>
            <person name="Marra M.A."/>
            <person name="Martienssen R."/>
            <person name="McCombie W.R."/>
        </authorList>
    </citation>
    <scope>NUCLEOTIDE SEQUENCE [LARGE SCALE GENOMIC DNA]</scope>
    <source>
        <strain>cv. Columbia</strain>
    </source>
</reference>
<reference key="3">
    <citation type="journal article" date="2017" name="Plant J.">
        <title>Araport11: a complete reannotation of the Arabidopsis thaliana reference genome.</title>
        <authorList>
            <person name="Cheng C.Y."/>
            <person name="Krishnakumar V."/>
            <person name="Chan A.P."/>
            <person name="Thibaud-Nissen F."/>
            <person name="Schobel S."/>
            <person name="Town C.D."/>
        </authorList>
    </citation>
    <scope>GENOME REANNOTATION</scope>
    <source>
        <strain>cv. Columbia</strain>
    </source>
</reference>
<reference key="4">
    <citation type="journal article" date="2001" name="New Phytol.">
        <title>The CDPK superfamily of protein kinases.</title>
        <authorList>
            <person name="Harmon A.C."/>
            <person name="Gribskov M."/>
            <person name="Gubrium E."/>
            <person name="Harper J.F."/>
        </authorList>
    </citation>
    <scope>GENE FAMILY</scope>
    <scope>NOMENCLATURE</scope>
</reference>
<reference key="5">
    <citation type="journal article" date="2002" name="Plant Physiol.">
        <title>Calcium signaling through protein kinases. The Arabidopsis calcium-dependent protein kinase gene family.</title>
        <authorList>
            <person name="Cheng S.-H."/>
            <person name="Willmann M.R."/>
            <person name="Chen H.-C."/>
            <person name="Sheen J."/>
        </authorList>
    </citation>
    <scope>GENE FAMILY</scope>
    <scope>NOMENCLATURE</scope>
</reference>
<reference key="6">
    <citation type="journal article" date="2003" name="Plant Physiol.">
        <title>The Arabidopsis CDPK-SnRK superfamily of protein kinases.</title>
        <authorList>
            <person name="Hrabak E.M."/>
            <person name="Chan C.W.M."/>
            <person name="Gribskov M."/>
            <person name="Harper J.F."/>
            <person name="Choi J.H."/>
            <person name="Halford N."/>
            <person name="Kudla J."/>
            <person name="Luan S."/>
            <person name="Nimmo H.G."/>
            <person name="Sussman M.R."/>
            <person name="Thomas M."/>
            <person name="Walker-Simmons K."/>
            <person name="Zhu J.-K."/>
            <person name="Harmon A.C."/>
        </authorList>
    </citation>
    <scope>GENE FAMILY</scope>
    <scope>NOMENCLATURE</scope>
</reference>
<reference key="7">
    <citation type="journal article" date="2003" name="Plant Physiol.">
        <title>Subcellular targeting of nine calcium-dependent protein kinase isoforms from Arabidopsis.</title>
        <authorList>
            <person name="Dammann C."/>
            <person name="Ichida A."/>
            <person name="Hong B."/>
            <person name="Romanowsky S.M."/>
            <person name="Hrabak E.M."/>
            <person name="Harmon A.C."/>
            <person name="Pickard B.G."/>
            <person name="Harper J.F."/>
        </authorList>
    </citation>
    <scope>SUBCELLULAR LOCATION</scope>
</reference>
<reference key="8">
    <citation type="journal article" date="2006" name="FEBS Lett.">
        <title>A novel yeast two-hybrid approach to identify CDPK substrates: characterization of the interaction between AtCPK11 and AtDi19, a nuclear zinc finger protein.</title>
        <authorList>
            <person name="Rodriguez Milla M.A."/>
            <person name="Uno Y."/>
            <person name="Chang I.-F."/>
            <person name="Townsend J."/>
            <person name="Maher E.A."/>
            <person name="Quilici D."/>
            <person name="Cushman J.C."/>
        </authorList>
    </citation>
    <scope>FUNCTION</scope>
    <scope>INTERACTION WITH DI19</scope>
</reference>
<reference key="9">
    <citation type="journal article" date="2007" name="Plant Cell">
        <title>Two calcium-dependent protein kinases, CPK4 and CPK11, regulate abscisic acid signal transduction in Arabidopsis.</title>
        <authorList>
            <person name="Zhu S.-Y."/>
            <person name="Yu X.-C."/>
            <person name="Wang X.-J."/>
            <person name="Zhao R."/>
            <person name="Li Y."/>
            <person name="Fan R.-C."/>
            <person name="Shang Y."/>
            <person name="Du S.-Y."/>
            <person name="Wang X.-F."/>
            <person name="Wu F.-Q."/>
            <person name="Xu Y.-H."/>
            <person name="Zhang X.-Y."/>
            <person name="Zhang D.-P."/>
        </authorList>
    </citation>
    <scope>FUNCTION</scope>
    <scope>DISRUPTION PHENOTYPE</scope>
</reference>
<keyword id="KW-0067">ATP-binding</keyword>
<keyword id="KW-0106">Calcium</keyword>
<keyword id="KW-0963">Cytoplasm</keyword>
<keyword id="KW-0418">Kinase</keyword>
<keyword id="KW-0479">Metal-binding</keyword>
<keyword id="KW-0547">Nucleotide-binding</keyword>
<keyword id="KW-0539">Nucleus</keyword>
<keyword id="KW-0597">Phosphoprotein</keyword>
<keyword id="KW-1185">Reference proteome</keyword>
<keyword id="KW-0677">Repeat</keyword>
<keyword id="KW-0723">Serine/threonine-protein kinase</keyword>
<keyword id="KW-0808">Transferase</keyword>
<sequence>MEKPNPRRPSNSVLPYETPRLRDHYLLGKKLGQGQFGTTYLCTEKSSSANYACKSIPKRKLVCREDYEDVWREIQIMHHLSEHPNVVRIKGTYEDSVFVHIVMEVCEGGELFDRIVSKGCFSEREAAKLIKTILGVVEACHSLGVMHRDLKPENFLFDSPSDDAKLKATDFGLSVFYKPGQYLYDVVGSPYYVAPEVLKKCYGPEIDVWSAGVILYILLSGVPPFWAETESGIFRQILQGKIDFKSDPWPTISEGAKDLIYKMLDRSPKKRISAHEALCHPWIVDEHAAPDKPLDPAVLSRLKQFSQMNKIKKMALRVIAERLSEEEIGGLKELFKMIDTDNSGTITFEELKAGLKRVGSELMESEIKSLMDAADIDNSGTIDYGEFLAATLHINKMEREENLVVAFSYFDKDGSGYITIDELQQACTEFGLCDTPLDDMIKEIDLDNDGKIDFSEFTAMMKKGDGVGRSRTMRNNLNFNIAEAFGVEDTSSTAKSDDSPK</sequence>
<organism>
    <name type="scientific">Arabidopsis thaliana</name>
    <name type="common">Mouse-ear cress</name>
    <dbReference type="NCBI Taxonomy" id="3702"/>
    <lineage>
        <taxon>Eukaryota</taxon>
        <taxon>Viridiplantae</taxon>
        <taxon>Streptophyta</taxon>
        <taxon>Embryophyta</taxon>
        <taxon>Tracheophyta</taxon>
        <taxon>Spermatophyta</taxon>
        <taxon>Magnoliopsida</taxon>
        <taxon>eudicotyledons</taxon>
        <taxon>Gunneridae</taxon>
        <taxon>Pentapetalae</taxon>
        <taxon>rosids</taxon>
        <taxon>malvids</taxon>
        <taxon>Brassicales</taxon>
        <taxon>Brassicaceae</taxon>
        <taxon>Camelineae</taxon>
        <taxon>Arabidopsis</taxon>
    </lineage>
</organism>
<name>CDPK4_ARATH</name>
<accession>Q38869</accession>
<proteinExistence type="evidence at protein level"/>
<gene>
    <name type="primary">CPK4</name>
    <name type="ordered locus">At4g09570</name>
    <name type="ORF">T25P22.10</name>
</gene>